<gene>
    <name type="primary">aco</name>
</gene>
<sequence length="368" mass="42885">MEIDIEKLPIIDISSFQNNENDKNQVAKEINKACKEYGFFYIKNHGVDQELIENLQNVIKKFFSLPLEIKMKWKMGLTNREWLGFFKVGQEITYGQVDWKEGCYYSSEMDGDINTIHNVPLYPTAEQEEQYEIQGFKSTIHTYIEKLTHLSQQIIEAISLSLNLPQDYFFKNYTYDPFILMGLLHYPSFHHQEQEEEQEDDESNNGGKKSPNPDESKKPEVEKFGTGQHTDWGLLTVLYQDDVGGLQVKSKNSEEYIDAPPIPGTFICNIGDMLDKMTGGYYLSNLHRVKYNKSGRDRFSIPFFLDPSLNSIPKLIPNYDQLSQFADKPERWDKQNIHEFDGTYGQYFIKKIGRVFPDYVYKKSGELV</sequence>
<organism>
    <name type="scientific">Dictyostelium mucoroides</name>
    <name type="common">Slime mold</name>
    <dbReference type="NCBI Taxonomy" id="31287"/>
    <lineage>
        <taxon>Eukaryota</taxon>
        <taxon>Amoebozoa</taxon>
        <taxon>Evosea</taxon>
        <taxon>Eumycetozoa</taxon>
        <taxon>Dictyostelia</taxon>
        <taxon>Dictyosteliales</taxon>
        <taxon>Dictyosteliaceae</taxon>
        <taxon>Dictyostelium</taxon>
    </lineage>
</organism>
<protein>
    <recommendedName>
        <fullName>1-aminocyclopropane-1-carboxylate oxidase</fullName>
        <shortName>ACC oxidase</shortName>
        <shortName>Dmaco</shortName>
        <ecNumber>1.14.17.4</ecNumber>
    </recommendedName>
    <alternativeName>
        <fullName>Ethylene-forming enzyme</fullName>
        <shortName>EFE</shortName>
    </alternativeName>
</protein>
<proteinExistence type="inferred from homology"/>
<name>ACCO1_DICMU</name>
<dbReference type="EC" id="1.14.17.4"/>
<dbReference type="EMBL" id="AB291210">
    <property type="protein sequence ID" value="BAF64840.1"/>
    <property type="molecule type" value="Genomic_DNA"/>
</dbReference>
<dbReference type="SMR" id="A6BM06"/>
<dbReference type="UniPathway" id="UPA00384">
    <property type="reaction ID" value="UER00563"/>
</dbReference>
<dbReference type="GO" id="GO:0009815">
    <property type="term" value="F:1-aminocyclopropane-1-carboxylate oxidase activity"/>
    <property type="evidence" value="ECO:0007669"/>
    <property type="project" value="UniProtKB-EC"/>
</dbReference>
<dbReference type="GO" id="GO:0051213">
    <property type="term" value="F:dioxygenase activity"/>
    <property type="evidence" value="ECO:0007669"/>
    <property type="project" value="UniProtKB-KW"/>
</dbReference>
<dbReference type="GO" id="GO:0046872">
    <property type="term" value="F:metal ion binding"/>
    <property type="evidence" value="ECO:0007669"/>
    <property type="project" value="UniProtKB-KW"/>
</dbReference>
<dbReference type="GO" id="GO:0009693">
    <property type="term" value="P:ethylene biosynthetic process"/>
    <property type="evidence" value="ECO:0007669"/>
    <property type="project" value="UniProtKB-UniPathway"/>
</dbReference>
<dbReference type="FunFam" id="2.60.120.330:FF:000049">
    <property type="entry name" value="Probable iron/ascorbate oxidoreductase"/>
    <property type="match status" value="1"/>
</dbReference>
<dbReference type="Gene3D" id="2.60.120.330">
    <property type="entry name" value="B-lactam Antibiotic, Isopenicillin N Synthase, Chain"/>
    <property type="match status" value="1"/>
</dbReference>
<dbReference type="InterPro" id="IPR026992">
    <property type="entry name" value="DIOX_N"/>
</dbReference>
<dbReference type="InterPro" id="IPR044861">
    <property type="entry name" value="IPNS-like_FE2OG_OXY"/>
</dbReference>
<dbReference type="InterPro" id="IPR027443">
    <property type="entry name" value="IPNS-like_sf"/>
</dbReference>
<dbReference type="InterPro" id="IPR050231">
    <property type="entry name" value="Iron_ascorbate_oxido_reductase"/>
</dbReference>
<dbReference type="InterPro" id="IPR005123">
    <property type="entry name" value="Oxoglu/Fe-dep_dioxygenase_dom"/>
</dbReference>
<dbReference type="PANTHER" id="PTHR47990">
    <property type="entry name" value="2-OXOGLUTARATE (2OG) AND FE(II)-DEPENDENT OXYGENASE SUPERFAMILY PROTEIN-RELATED"/>
    <property type="match status" value="1"/>
</dbReference>
<dbReference type="Pfam" id="PF03171">
    <property type="entry name" value="2OG-FeII_Oxy"/>
    <property type="match status" value="1"/>
</dbReference>
<dbReference type="Pfam" id="PF14226">
    <property type="entry name" value="DIOX_N"/>
    <property type="match status" value="1"/>
</dbReference>
<dbReference type="PRINTS" id="PR00682">
    <property type="entry name" value="IPNSYNTHASE"/>
</dbReference>
<dbReference type="SUPFAM" id="SSF51197">
    <property type="entry name" value="Clavaminate synthase-like"/>
    <property type="match status" value="1"/>
</dbReference>
<dbReference type="PROSITE" id="PS51471">
    <property type="entry name" value="FE2OG_OXY"/>
    <property type="match status" value="1"/>
</dbReference>
<keyword id="KW-0223">Dioxygenase</keyword>
<keyword id="KW-0266">Ethylene biosynthesis</keyword>
<keyword id="KW-0408">Iron</keyword>
<keyword id="KW-0479">Metal-binding</keyword>
<keyword id="KW-0560">Oxidoreductase</keyword>
<comment type="function">
    <text evidence="3">Involved in ethylene biosynthesis and macrocyst formation. Overexpression induces overproduction of ethylene and augmented zyg1 expression and zygote formation.</text>
</comment>
<comment type="catalytic activity">
    <reaction>
        <text>1-aminocyclopropane-1-carboxylate + L-ascorbate + O2 = ethene + L-dehydroascorbate + hydrogen cyanide + CO2 + 2 H2O</text>
        <dbReference type="Rhea" id="RHEA:23640"/>
        <dbReference type="ChEBI" id="CHEBI:15377"/>
        <dbReference type="ChEBI" id="CHEBI:15379"/>
        <dbReference type="ChEBI" id="CHEBI:16526"/>
        <dbReference type="ChEBI" id="CHEBI:18153"/>
        <dbReference type="ChEBI" id="CHEBI:18407"/>
        <dbReference type="ChEBI" id="CHEBI:38290"/>
        <dbReference type="ChEBI" id="CHEBI:58360"/>
        <dbReference type="ChEBI" id="CHEBI:58539"/>
        <dbReference type="EC" id="1.14.17.4"/>
    </reaction>
</comment>
<comment type="cofactor">
    <cofactor evidence="1">
        <name>Fe(2+)</name>
        <dbReference type="ChEBI" id="CHEBI:29033"/>
    </cofactor>
    <text evidence="1">Binds 1 Fe(2+) ion per subunit.</text>
</comment>
<comment type="pathway">
    <text>Alkene biosynthesis; ethylene biosynthesis via S-adenosyl-L-methionine; ethylene from S-adenosyl-L-methionine: step 2/2.</text>
</comment>
<comment type="disruption phenotype">
    <text evidence="3">Show reduced level of ethylene production, suppressed zyg1 expression thus resulting in inhibition of zygote formation and impaired macrocyst formation.</text>
</comment>
<comment type="similarity">
    <text evidence="4">Belongs to the iron/ascorbate-dependent oxidoreductase family.</text>
</comment>
<reference key="1">
    <citation type="journal article" date="2007" name="Exp. Cell Res.">
        <title>Ethylene induces zygote formation through an enhanced expression of zyg1 in Dictyostelium mucoroides.</title>
        <authorList>
            <person name="Amagai A."/>
            <person name="Soramoto S."/>
            <person name="Saito S."/>
            <person name="Maeda Y."/>
        </authorList>
    </citation>
    <scope>NUCLEOTIDE SEQUENCE [GENOMIC DNA]</scope>
    <scope>FUNCTION</scope>
    <scope>DISRUPTION PHENOTYPE</scope>
</reference>
<feature type="chain" id="PRO_0000392076" description="1-aminocyclopropane-1-carboxylate oxidase">
    <location>
        <begin position="1"/>
        <end position="368"/>
    </location>
</feature>
<feature type="domain" description="Fe2OG dioxygenase" evidence="1">
    <location>
        <begin position="177"/>
        <end position="307"/>
    </location>
</feature>
<feature type="region of interest" description="Disordered" evidence="2">
    <location>
        <begin position="191"/>
        <end position="226"/>
    </location>
</feature>
<feature type="compositionally biased region" description="Acidic residues" evidence="2">
    <location>
        <begin position="194"/>
        <end position="203"/>
    </location>
</feature>
<feature type="compositionally biased region" description="Basic and acidic residues" evidence="2">
    <location>
        <begin position="211"/>
        <end position="223"/>
    </location>
</feature>
<feature type="binding site" evidence="1">
    <location>
        <position position="229"/>
    </location>
    <ligand>
        <name>Fe cation</name>
        <dbReference type="ChEBI" id="CHEBI:24875"/>
    </ligand>
</feature>
<feature type="binding site" evidence="1">
    <location>
        <position position="231"/>
    </location>
    <ligand>
        <name>Fe cation</name>
        <dbReference type="ChEBI" id="CHEBI:24875"/>
    </ligand>
</feature>
<feature type="binding site" evidence="1">
    <location>
        <position position="287"/>
    </location>
    <ligand>
        <name>Fe cation</name>
        <dbReference type="ChEBI" id="CHEBI:24875"/>
    </ligand>
</feature>
<feature type="binding site" evidence="1">
    <location>
        <position position="298"/>
    </location>
    <ligand>
        <name>2-oxoglutarate</name>
        <dbReference type="ChEBI" id="CHEBI:16810"/>
    </ligand>
</feature>
<evidence type="ECO:0000255" key="1">
    <source>
        <dbReference type="PROSITE-ProRule" id="PRU00805"/>
    </source>
</evidence>
<evidence type="ECO:0000256" key="2">
    <source>
        <dbReference type="SAM" id="MobiDB-lite"/>
    </source>
</evidence>
<evidence type="ECO:0000269" key="3">
    <source>
    </source>
</evidence>
<evidence type="ECO:0000305" key="4"/>
<accession>A6BM06</accession>